<accession>A1VZQ4</accession>
<accession>P45678</accession>
<feature type="signal peptide" evidence="1">
    <location>
        <begin position="1"/>
        <end position="26"/>
    </location>
</feature>
<feature type="chain" id="PRO_0000285823" description="Major cell-binding factor">
    <location>
        <begin position="27"/>
        <end position="259"/>
    </location>
</feature>
<feature type="sequence conflict" description="In Ref. 1; AAA02919." evidence="2" ref="1">
    <original>N</original>
    <variation>K</variation>
    <location>
        <position position="139"/>
    </location>
</feature>
<proteinExistence type="inferred from homology"/>
<gene>
    <name type="primary">peb1A</name>
    <name type="synonym">pebA</name>
    <name type="ordered locus">CJJ81176_0928</name>
</gene>
<keyword id="KW-0732">Signal</keyword>
<keyword id="KW-0813">Transport</keyword>
<reference key="1">
    <citation type="journal article" date="1993" name="J. Biol. Chem.">
        <title>PEB1, the major cell-binding factor of Campylobacter jejuni, is a homolog of the binding component in Gram-negative nutrient transport systems.</title>
        <authorList>
            <person name="Pei Z."/>
            <person name="Blaser M.J."/>
        </authorList>
    </citation>
    <scope>NUCLEOTIDE SEQUENCE [GENOMIC DNA]</scope>
</reference>
<reference key="2">
    <citation type="submission" date="2006-12" db="EMBL/GenBank/DDBJ databases">
        <authorList>
            <person name="Fouts D.E."/>
            <person name="Nelson K.E."/>
            <person name="Sebastian Y."/>
        </authorList>
    </citation>
    <scope>NUCLEOTIDE SEQUENCE [LARGE SCALE GENOMIC DNA]</scope>
    <source>
        <strain>81-176</strain>
    </source>
</reference>
<dbReference type="EMBL" id="L13662">
    <property type="protein sequence ID" value="AAA02919.1"/>
    <property type="molecule type" value="Unassigned_DNA"/>
</dbReference>
<dbReference type="EMBL" id="CP000538">
    <property type="protein sequence ID" value="EAQ71888.1"/>
    <property type="molecule type" value="Genomic_DNA"/>
</dbReference>
<dbReference type="PIR" id="A48518">
    <property type="entry name" value="A48518"/>
</dbReference>
<dbReference type="RefSeq" id="WP_002865903.1">
    <property type="nucleotide sequence ID" value="NC_008787.1"/>
</dbReference>
<dbReference type="SMR" id="A1VZQ4"/>
<dbReference type="KEGG" id="cjj:CJJ81176_0928"/>
<dbReference type="eggNOG" id="COG0834">
    <property type="taxonomic scope" value="Bacteria"/>
</dbReference>
<dbReference type="HOGENOM" id="CLU_019602_18_4_7"/>
<dbReference type="Proteomes" id="UP000000646">
    <property type="component" value="Chromosome"/>
</dbReference>
<dbReference type="GO" id="GO:0009986">
    <property type="term" value="C:cell surface"/>
    <property type="evidence" value="ECO:0007669"/>
    <property type="project" value="UniProtKB-SubCell"/>
</dbReference>
<dbReference type="GO" id="GO:0005576">
    <property type="term" value="C:extracellular region"/>
    <property type="evidence" value="ECO:0007669"/>
    <property type="project" value="TreeGrafter"/>
</dbReference>
<dbReference type="GO" id="GO:0030288">
    <property type="term" value="C:outer membrane-bounded periplasmic space"/>
    <property type="evidence" value="ECO:0007669"/>
    <property type="project" value="TreeGrafter"/>
</dbReference>
<dbReference type="GO" id="GO:0006865">
    <property type="term" value="P:amino acid transport"/>
    <property type="evidence" value="ECO:0007669"/>
    <property type="project" value="TreeGrafter"/>
</dbReference>
<dbReference type="CDD" id="cd13691">
    <property type="entry name" value="PBP2_Peb1a_like"/>
    <property type="match status" value="1"/>
</dbReference>
<dbReference type="Gene3D" id="3.40.190.10">
    <property type="entry name" value="Periplasmic binding protein-like II"/>
    <property type="match status" value="2"/>
</dbReference>
<dbReference type="InterPro" id="IPR051455">
    <property type="entry name" value="Bact_solute-bind_prot3"/>
</dbReference>
<dbReference type="InterPro" id="IPR018313">
    <property type="entry name" value="SBP_3_CS"/>
</dbReference>
<dbReference type="InterPro" id="IPR001638">
    <property type="entry name" value="Solute-binding_3/MltF_N"/>
</dbReference>
<dbReference type="NCBIfam" id="NF008885">
    <property type="entry name" value="PRK11917.1"/>
    <property type="match status" value="1"/>
</dbReference>
<dbReference type="PANTHER" id="PTHR30085:SF6">
    <property type="entry name" value="ABC TRANSPORTER GLUTAMINE-BINDING PROTEIN GLNH"/>
    <property type="match status" value="1"/>
</dbReference>
<dbReference type="PANTHER" id="PTHR30085">
    <property type="entry name" value="AMINO ACID ABC TRANSPORTER PERMEASE"/>
    <property type="match status" value="1"/>
</dbReference>
<dbReference type="Pfam" id="PF00497">
    <property type="entry name" value="SBP_bac_3"/>
    <property type="match status" value="1"/>
</dbReference>
<dbReference type="SMART" id="SM00062">
    <property type="entry name" value="PBPb"/>
    <property type="match status" value="1"/>
</dbReference>
<dbReference type="SUPFAM" id="SSF53850">
    <property type="entry name" value="Periplasmic binding protein-like II"/>
    <property type="match status" value="1"/>
</dbReference>
<dbReference type="PROSITE" id="PS01039">
    <property type="entry name" value="SBP_BACTERIAL_3"/>
    <property type="match status" value="1"/>
</dbReference>
<protein>
    <recommendedName>
        <fullName>Major cell-binding factor</fullName>
    </recommendedName>
    <alternativeName>
        <fullName>CBF1</fullName>
    </alternativeName>
    <alternativeName>
        <fullName>PEB1</fullName>
    </alternativeName>
</protein>
<organism>
    <name type="scientific">Campylobacter jejuni subsp. jejuni serotype O:23/36 (strain 81-176)</name>
    <dbReference type="NCBI Taxonomy" id="354242"/>
    <lineage>
        <taxon>Bacteria</taxon>
        <taxon>Pseudomonadati</taxon>
        <taxon>Campylobacterota</taxon>
        <taxon>Epsilonproteobacteria</taxon>
        <taxon>Campylobacterales</taxon>
        <taxon>Campylobacteraceae</taxon>
        <taxon>Campylobacter</taxon>
    </lineage>
</organism>
<evidence type="ECO:0000250" key="1"/>
<evidence type="ECO:0000305" key="2"/>
<name>PEB1A_CAMJJ</name>
<sequence length="259" mass="28164">MVFRKSLLKLAVFALGACVAFSNANAAEGKLESIKSKGQLIVGVKNDVPHYALLDQATGEIKGFEVDVAKLLAKSILGDDKKIKLVAVNAKTRGPLLDNGSVDAVIATFTITPERKRIYNFSEPYYQDAIGLLVLKEKNYKSLADMKGANIGVAQAATTKKAIGEAAKKIGIDVKFSEFPDYPSIKAALDAKRVDAFSVDKSILLGYVDDKSEILPDSFEPQSYGIVTKKDDPAFAKYVDDFVKEHKNEIDALAKKWGL</sequence>
<comment type="function">
    <text>Common antigen and a major cell adherence molecule. Most probably involved, with PEB1C, in a binding-protein-dependent transport system for an amino acid. May be involved in binding to intestinal cells.</text>
</comment>
<comment type="subcellular location">
    <subcellularLocation>
        <location>Cell surface</location>
    </subcellularLocation>
</comment>
<comment type="similarity">
    <text evidence="2">Belongs to the bacterial solute-binding protein 3 family.</text>
</comment>